<sequence>MKGLGIKVPRAVSTGTKLTCADNTGARVVQVVSVFGYHGVRRRQPKLGLADIATVSVKKGTPDMRRKLVRAVVIRQKKEIRRPSGLRLSFEDNAVVVVDDKNEPRGTEIKGPVAREVAIRYPRIGSMATIIV</sequence>
<reference key="1">
    <citation type="journal article" date="2016" name="Stand. Genomic Sci.">
        <title>Complete genome sequence of Methanospirillum hungatei type strain JF1.</title>
        <authorList>
            <person name="Gunsalus R.P."/>
            <person name="Cook L.E."/>
            <person name="Crable B."/>
            <person name="Rohlin L."/>
            <person name="McDonald E."/>
            <person name="Mouttaki H."/>
            <person name="Sieber J.R."/>
            <person name="Poweleit N."/>
            <person name="Zhou H."/>
            <person name="Lapidus A.L."/>
            <person name="Daligault H.E."/>
            <person name="Land M."/>
            <person name="Gilna P."/>
            <person name="Ivanova N."/>
            <person name="Kyrpides N."/>
            <person name="Culley D.E."/>
            <person name="McInerney M.J."/>
        </authorList>
    </citation>
    <scope>NUCLEOTIDE SEQUENCE [LARGE SCALE GENOMIC DNA]</scope>
    <source>
        <strain>ATCC 27890 / DSM 864 / NBRC 100397 / JF-1</strain>
    </source>
</reference>
<evidence type="ECO:0000255" key="1">
    <source>
        <dbReference type="HAMAP-Rule" id="MF_01367"/>
    </source>
</evidence>
<evidence type="ECO:0000305" key="2"/>
<keyword id="KW-1185">Reference proteome</keyword>
<keyword id="KW-0687">Ribonucleoprotein</keyword>
<keyword id="KW-0689">Ribosomal protein</keyword>
<keyword id="KW-0694">RNA-binding</keyword>
<keyword id="KW-0699">rRNA-binding</keyword>
<comment type="function">
    <text evidence="1">Binds to 23S rRNA. Forms part of two intersubunit bridges in the 70S ribosome.</text>
</comment>
<comment type="subunit">
    <text evidence="1">Part of the 50S ribosomal subunit. Forms a cluster with proteins L3 and L24e, part of which may contact the 16S rRNA in 2 intersubunit bridges.</text>
</comment>
<comment type="similarity">
    <text evidence="1">Belongs to the universal ribosomal protein uL14 family.</text>
</comment>
<gene>
    <name evidence="1" type="primary">rpl14</name>
    <name type="ordered locus">Mhun_2243</name>
</gene>
<protein>
    <recommendedName>
        <fullName evidence="1">Large ribosomal subunit protein uL14</fullName>
    </recommendedName>
    <alternativeName>
        <fullName evidence="2">50S ribosomal protein L14</fullName>
    </alternativeName>
</protein>
<proteinExistence type="inferred from homology"/>
<name>RL14_METHJ</name>
<dbReference type="EMBL" id="CP000254">
    <property type="protein sequence ID" value="ABD41948.1"/>
    <property type="molecule type" value="Genomic_DNA"/>
</dbReference>
<dbReference type="RefSeq" id="WP_011449206.1">
    <property type="nucleotide sequence ID" value="NC_007796.1"/>
</dbReference>
<dbReference type="SMR" id="Q2FT33"/>
<dbReference type="FunCoup" id="Q2FT33">
    <property type="interactions" value="209"/>
</dbReference>
<dbReference type="STRING" id="323259.Mhun_2243"/>
<dbReference type="EnsemblBacteria" id="ABD41948">
    <property type="protein sequence ID" value="ABD41948"/>
    <property type="gene ID" value="Mhun_2243"/>
</dbReference>
<dbReference type="KEGG" id="mhu:Mhun_2243"/>
<dbReference type="eggNOG" id="arCOG04095">
    <property type="taxonomic scope" value="Archaea"/>
</dbReference>
<dbReference type="HOGENOM" id="CLU_095071_3_0_2"/>
<dbReference type="InParanoid" id="Q2FT33"/>
<dbReference type="OrthoDB" id="23569at2157"/>
<dbReference type="Proteomes" id="UP000001941">
    <property type="component" value="Chromosome"/>
</dbReference>
<dbReference type="GO" id="GO:0022625">
    <property type="term" value="C:cytosolic large ribosomal subunit"/>
    <property type="evidence" value="ECO:0007669"/>
    <property type="project" value="TreeGrafter"/>
</dbReference>
<dbReference type="GO" id="GO:0070180">
    <property type="term" value="F:large ribosomal subunit rRNA binding"/>
    <property type="evidence" value="ECO:0007669"/>
    <property type="project" value="TreeGrafter"/>
</dbReference>
<dbReference type="GO" id="GO:0003735">
    <property type="term" value="F:structural constituent of ribosome"/>
    <property type="evidence" value="ECO:0007669"/>
    <property type="project" value="InterPro"/>
</dbReference>
<dbReference type="GO" id="GO:0006412">
    <property type="term" value="P:translation"/>
    <property type="evidence" value="ECO:0007669"/>
    <property type="project" value="UniProtKB-UniRule"/>
</dbReference>
<dbReference type="CDD" id="cd00337">
    <property type="entry name" value="Ribosomal_uL14"/>
    <property type="match status" value="1"/>
</dbReference>
<dbReference type="FunFam" id="2.40.150.20:FF:000007">
    <property type="entry name" value="50S ribosomal protein L14"/>
    <property type="match status" value="1"/>
</dbReference>
<dbReference type="Gene3D" id="2.40.150.20">
    <property type="entry name" value="Ribosomal protein L14"/>
    <property type="match status" value="1"/>
</dbReference>
<dbReference type="HAMAP" id="MF_01367">
    <property type="entry name" value="Ribosomal_uL14"/>
    <property type="match status" value="1"/>
</dbReference>
<dbReference type="InterPro" id="IPR000218">
    <property type="entry name" value="Ribosomal_uL14"/>
</dbReference>
<dbReference type="InterPro" id="IPR019971">
    <property type="entry name" value="Ribosomal_uL14_arc"/>
</dbReference>
<dbReference type="InterPro" id="IPR019972">
    <property type="entry name" value="Ribosomal_uL14_CS"/>
</dbReference>
<dbReference type="InterPro" id="IPR036853">
    <property type="entry name" value="Ribosomal_uL14_sf"/>
</dbReference>
<dbReference type="NCBIfam" id="NF006344">
    <property type="entry name" value="PRK08571.1"/>
    <property type="match status" value="1"/>
</dbReference>
<dbReference type="NCBIfam" id="TIGR03673">
    <property type="entry name" value="uL14_arch"/>
    <property type="match status" value="1"/>
</dbReference>
<dbReference type="PANTHER" id="PTHR11761">
    <property type="entry name" value="50S/60S RIBOSOMAL PROTEIN L14/L23"/>
    <property type="match status" value="1"/>
</dbReference>
<dbReference type="PANTHER" id="PTHR11761:SF8">
    <property type="entry name" value="LARGE RIBOSOMAL SUBUNIT PROTEIN UL14"/>
    <property type="match status" value="1"/>
</dbReference>
<dbReference type="Pfam" id="PF00238">
    <property type="entry name" value="Ribosomal_L14"/>
    <property type="match status" value="1"/>
</dbReference>
<dbReference type="SMART" id="SM01374">
    <property type="entry name" value="Ribosomal_L14"/>
    <property type="match status" value="1"/>
</dbReference>
<dbReference type="SUPFAM" id="SSF50193">
    <property type="entry name" value="Ribosomal protein L14"/>
    <property type="match status" value="1"/>
</dbReference>
<dbReference type="PROSITE" id="PS00049">
    <property type="entry name" value="RIBOSOMAL_L14"/>
    <property type="match status" value="1"/>
</dbReference>
<accession>Q2FT33</accession>
<organism>
    <name type="scientific">Methanospirillum hungatei JF-1 (strain ATCC 27890 / DSM 864 / NBRC 100397 / JF-1)</name>
    <dbReference type="NCBI Taxonomy" id="323259"/>
    <lineage>
        <taxon>Archaea</taxon>
        <taxon>Methanobacteriati</taxon>
        <taxon>Methanobacteriota</taxon>
        <taxon>Stenosarchaea group</taxon>
        <taxon>Methanomicrobia</taxon>
        <taxon>Methanomicrobiales</taxon>
        <taxon>Methanospirillaceae</taxon>
        <taxon>Methanospirillum</taxon>
    </lineage>
</organism>
<feature type="chain" id="PRO_0000266607" description="Large ribosomal subunit protein uL14">
    <location>
        <begin position="1"/>
        <end position="132"/>
    </location>
</feature>